<sequence>MTNLNYQQTHFVMSAPDIRHLPSDCGIEVAFAGRSNAGKSSALNTLTNQKSLARTSKTPGRTQLINLFEVVEGKRLVDLPGYGYAEVPEEMKRKWQRALGEYLEKRQSLQGLVVLMDIRHPLKDLDQQMIQWAVESNIQVLVLLTKADKLASGARKAQLNMVREAVLAFNGDVQVEAFSSLKKQGVDKLRQKLDSWFSELAPVEEIQDGE</sequence>
<name>ENGB_SALDC</name>
<feature type="chain" id="PRO_1000116001" description="Probable GTP-binding protein EngB">
    <location>
        <begin position="1"/>
        <end position="210"/>
    </location>
</feature>
<feature type="domain" description="EngB-type G" evidence="1">
    <location>
        <begin position="25"/>
        <end position="199"/>
    </location>
</feature>
<feature type="binding site" evidence="1">
    <location>
        <begin position="33"/>
        <end position="40"/>
    </location>
    <ligand>
        <name>GTP</name>
        <dbReference type="ChEBI" id="CHEBI:37565"/>
    </ligand>
</feature>
<feature type="binding site" evidence="1">
    <location>
        <position position="40"/>
    </location>
    <ligand>
        <name>Mg(2+)</name>
        <dbReference type="ChEBI" id="CHEBI:18420"/>
    </ligand>
</feature>
<feature type="binding site" evidence="1">
    <location>
        <begin position="60"/>
        <end position="64"/>
    </location>
    <ligand>
        <name>GTP</name>
        <dbReference type="ChEBI" id="CHEBI:37565"/>
    </ligand>
</feature>
<feature type="binding site" evidence="1">
    <location>
        <position position="62"/>
    </location>
    <ligand>
        <name>Mg(2+)</name>
        <dbReference type="ChEBI" id="CHEBI:18420"/>
    </ligand>
</feature>
<feature type="binding site" evidence="1">
    <location>
        <begin position="78"/>
        <end position="81"/>
    </location>
    <ligand>
        <name>GTP</name>
        <dbReference type="ChEBI" id="CHEBI:37565"/>
    </ligand>
</feature>
<feature type="binding site" evidence="1">
    <location>
        <begin position="145"/>
        <end position="148"/>
    </location>
    <ligand>
        <name>GTP</name>
        <dbReference type="ChEBI" id="CHEBI:37565"/>
    </ligand>
</feature>
<feature type="binding site" evidence="1">
    <location>
        <begin position="178"/>
        <end position="180"/>
    </location>
    <ligand>
        <name>GTP</name>
        <dbReference type="ChEBI" id="CHEBI:37565"/>
    </ligand>
</feature>
<protein>
    <recommendedName>
        <fullName evidence="1">Probable GTP-binding protein EngB</fullName>
    </recommendedName>
</protein>
<accession>B5FNZ2</accession>
<dbReference type="EMBL" id="CP001144">
    <property type="protein sequence ID" value="ACH76363.1"/>
    <property type="molecule type" value="Genomic_DNA"/>
</dbReference>
<dbReference type="SMR" id="B5FNZ2"/>
<dbReference type="KEGG" id="sed:SeD_A4390"/>
<dbReference type="HOGENOM" id="CLU_033732_1_0_6"/>
<dbReference type="Proteomes" id="UP000008322">
    <property type="component" value="Chromosome"/>
</dbReference>
<dbReference type="GO" id="GO:0005829">
    <property type="term" value="C:cytosol"/>
    <property type="evidence" value="ECO:0007669"/>
    <property type="project" value="TreeGrafter"/>
</dbReference>
<dbReference type="GO" id="GO:0005525">
    <property type="term" value="F:GTP binding"/>
    <property type="evidence" value="ECO:0007669"/>
    <property type="project" value="UniProtKB-UniRule"/>
</dbReference>
<dbReference type="GO" id="GO:0046872">
    <property type="term" value="F:metal ion binding"/>
    <property type="evidence" value="ECO:0007669"/>
    <property type="project" value="UniProtKB-KW"/>
</dbReference>
<dbReference type="GO" id="GO:0000917">
    <property type="term" value="P:division septum assembly"/>
    <property type="evidence" value="ECO:0007669"/>
    <property type="project" value="UniProtKB-KW"/>
</dbReference>
<dbReference type="CDD" id="cd01876">
    <property type="entry name" value="YihA_EngB"/>
    <property type="match status" value="1"/>
</dbReference>
<dbReference type="FunFam" id="3.40.50.300:FF:000098">
    <property type="entry name" value="Probable GTP-binding protein EngB"/>
    <property type="match status" value="1"/>
</dbReference>
<dbReference type="Gene3D" id="3.40.50.300">
    <property type="entry name" value="P-loop containing nucleotide triphosphate hydrolases"/>
    <property type="match status" value="1"/>
</dbReference>
<dbReference type="HAMAP" id="MF_00321">
    <property type="entry name" value="GTPase_EngB"/>
    <property type="match status" value="1"/>
</dbReference>
<dbReference type="InterPro" id="IPR030393">
    <property type="entry name" value="G_ENGB_dom"/>
</dbReference>
<dbReference type="InterPro" id="IPR006073">
    <property type="entry name" value="GTP-bd"/>
</dbReference>
<dbReference type="InterPro" id="IPR019987">
    <property type="entry name" value="GTP-bd_ribosome_bio_YsxC"/>
</dbReference>
<dbReference type="InterPro" id="IPR027417">
    <property type="entry name" value="P-loop_NTPase"/>
</dbReference>
<dbReference type="NCBIfam" id="TIGR03598">
    <property type="entry name" value="GTPase_YsxC"/>
    <property type="match status" value="1"/>
</dbReference>
<dbReference type="PANTHER" id="PTHR11649:SF13">
    <property type="entry name" value="ENGB-TYPE G DOMAIN-CONTAINING PROTEIN"/>
    <property type="match status" value="1"/>
</dbReference>
<dbReference type="PANTHER" id="PTHR11649">
    <property type="entry name" value="MSS1/TRME-RELATED GTP-BINDING PROTEIN"/>
    <property type="match status" value="1"/>
</dbReference>
<dbReference type="Pfam" id="PF01926">
    <property type="entry name" value="MMR_HSR1"/>
    <property type="match status" value="1"/>
</dbReference>
<dbReference type="SUPFAM" id="SSF52540">
    <property type="entry name" value="P-loop containing nucleoside triphosphate hydrolases"/>
    <property type="match status" value="1"/>
</dbReference>
<dbReference type="PROSITE" id="PS51706">
    <property type="entry name" value="G_ENGB"/>
    <property type="match status" value="1"/>
</dbReference>
<comment type="function">
    <text evidence="1">Necessary for normal cell division and for the maintenance of normal septation.</text>
</comment>
<comment type="cofactor">
    <cofactor evidence="1">
        <name>Mg(2+)</name>
        <dbReference type="ChEBI" id="CHEBI:18420"/>
    </cofactor>
</comment>
<comment type="similarity">
    <text evidence="1">Belongs to the TRAFAC class TrmE-Era-EngA-EngB-Septin-like GTPase superfamily. EngB GTPase family.</text>
</comment>
<gene>
    <name evidence="1" type="primary">engB</name>
    <name type="ordered locus">SeD_A4390</name>
</gene>
<reference key="1">
    <citation type="journal article" date="2011" name="J. Bacteriol.">
        <title>Comparative genomics of 28 Salmonella enterica isolates: evidence for CRISPR-mediated adaptive sublineage evolution.</title>
        <authorList>
            <person name="Fricke W.F."/>
            <person name="Mammel M.K."/>
            <person name="McDermott P.F."/>
            <person name="Tartera C."/>
            <person name="White D.G."/>
            <person name="Leclerc J.E."/>
            <person name="Ravel J."/>
            <person name="Cebula T.A."/>
        </authorList>
    </citation>
    <scope>NUCLEOTIDE SEQUENCE [LARGE SCALE GENOMIC DNA]</scope>
    <source>
        <strain>CT_02021853</strain>
    </source>
</reference>
<evidence type="ECO:0000255" key="1">
    <source>
        <dbReference type="HAMAP-Rule" id="MF_00321"/>
    </source>
</evidence>
<proteinExistence type="inferred from homology"/>
<keyword id="KW-0131">Cell cycle</keyword>
<keyword id="KW-0132">Cell division</keyword>
<keyword id="KW-0342">GTP-binding</keyword>
<keyword id="KW-0460">Magnesium</keyword>
<keyword id="KW-0479">Metal-binding</keyword>
<keyword id="KW-0547">Nucleotide-binding</keyword>
<keyword id="KW-0717">Septation</keyword>
<organism>
    <name type="scientific">Salmonella dublin (strain CT_02021853)</name>
    <dbReference type="NCBI Taxonomy" id="439851"/>
    <lineage>
        <taxon>Bacteria</taxon>
        <taxon>Pseudomonadati</taxon>
        <taxon>Pseudomonadota</taxon>
        <taxon>Gammaproteobacteria</taxon>
        <taxon>Enterobacterales</taxon>
        <taxon>Enterobacteriaceae</taxon>
        <taxon>Salmonella</taxon>
    </lineage>
</organism>